<gene>
    <name type="primary">med26</name>
    <name type="ORF">DDB_G0275733</name>
</gene>
<proteinExistence type="inferred from homology"/>
<protein>
    <recommendedName>
        <fullName>Putative mediator of RNA polymerase II transcription subunit 26</fullName>
    </recommendedName>
    <alternativeName>
        <fullName>Putative mediator complex subunit 26</fullName>
    </alternativeName>
</protein>
<reference key="1">
    <citation type="journal article" date="2002" name="Nature">
        <title>Sequence and analysis of chromosome 2 of Dictyostelium discoideum.</title>
        <authorList>
            <person name="Gloeckner G."/>
            <person name="Eichinger L."/>
            <person name="Szafranski K."/>
            <person name="Pachebat J.A."/>
            <person name="Bankier A.T."/>
            <person name="Dear P.H."/>
            <person name="Lehmann R."/>
            <person name="Baumgart C."/>
            <person name="Parra G."/>
            <person name="Abril J.F."/>
            <person name="Guigo R."/>
            <person name="Kumpf K."/>
            <person name="Tunggal B."/>
            <person name="Cox E.C."/>
            <person name="Quail M.A."/>
            <person name="Platzer M."/>
            <person name="Rosenthal A."/>
            <person name="Noegel A.A."/>
        </authorList>
    </citation>
    <scope>NUCLEOTIDE SEQUENCE [LARGE SCALE GENOMIC DNA]</scope>
    <source>
        <strain>AX4</strain>
    </source>
</reference>
<reference key="2">
    <citation type="journal article" date="2005" name="Nature">
        <title>The genome of the social amoeba Dictyostelium discoideum.</title>
        <authorList>
            <person name="Eichinger L."/>
            <person name="Pachebat J.A."/>
            <person name="Gloeckner G."/>
            <person name="Rajandream M.A."/>
            <person name="Sucgang R."/>
            <person name="Berriman M."/>
            <person name="Song J."/>
            <person name="Olsen R."/>
            <person name="Szafranski K."/>
            <person name="Xu Q."/>
            <person name="Tunggal B."/>
            <person name="Kummerfeld S."/>
            <person name="Madera M."/>
            <person name="Konfortov B.A."/>
            <person name="Rivero F."/>
            <person name="Bankier A.T."/>
            <person name="Lehmann R."/>
            <person name="Hamlin N."/>
            <person name="Davies R."/>
            <person name="Gaudet P."/>
            <person name="Fey P."/>
            <person name="Pilcher K."/>
            <person name="Chen G."/>
            <person name="Saunders D."/>
            <person name="Sodergren E.J."/>
            <person name="Davis P."/>
            <person name="Kerhornou A."/>
            <person name="Nie X."/>
            <person name="Hall N."/>
            <person name="Anjard C."/>
            <person name="Hemphill L."/>
            <person name="Bason N."/>
            <person name="Farbrother P."/>
            <person name="Desany B."/>
            <person name="Just E."/>
            <person name="Morio T."/>
            <person name="Rost R."/>
            <person name="Churcher C.M."/>
            <person name="Cooper J."/>
            <person name="Haydock S."/>
            <person name="van Driessche N."/>
            <person name="Cronin A."/>
            <person name="Goodhead I."/>
            <person name="Muzny D.M."/>
            <person name="Mourier T."/>
            <person name="Pain A."/>
            <person name="Lu M."/>
            <person name="Harper D."/>
            <person name="Lindsay R."/>
            <person name="Hauser H."/>
            <person name="James K.D."/>
            <person name="Quiles M."/>
            <person name="Madan Babu M."/>
            <person name="Saito T."/>
            <person name="Buchrieser C."/>
            <person name="Wardroper A."/>
            <person name="Felder M."/>
            <person name="Thangavelu M."/>
            <person name="Johnson D."/>
            <person name="Knights A."/>
            <person name="Loulseged H."/>
            <person name="Mungall K.L."/>
            <person name="Oliver K."/>
            <person name="Price C."/>
            <person name="Quail M.A."/>
            <person name="Urushihara H."/>
            <person name="Hernandez J."/>
            <person name="Rabbinowitsch E."/>
            <person name="Steffen D."/>
            <person name="Sanders M."/>
            <person name="Ma J."/>
            <person name="Kohara Y."/>
            <person name="Sharp S."/>
            <person name="Simmonds M.N."/>
            <person name="Spiegler S."/>
            <person name="Tivey A."/>
            <person name="Sugano S."/>
            <person name="White B."/>
            <person name="Walker D."/>
            <person name="Woodward J.R."/>
            <person name="Winckler T."/>
            <person name="Tanaka Y."/>
            <person name="Shaulsky G."/>
            <person name="Schleicher M."/>
            <person name="Weinstock G.M."/>
            <person name="Rosenthal A."/>
            <person name="Cox E.C."/>
            <person name="Chisholm R.L."/>
            <person name="Gibbs R.A."/>
            <person name="Loomis W.F."/>
            <person name="Platzer M."/>
            <person name="Kay R.R."/>
            <person name="Williams J.G."/>
            <person name="Dear P.H."/>
            <person name="Noegel A.A."/>
            <person name="Barrell B.G."/>
            <person name="Kuspa A."/>
        </authorList>
    </citation>
    <scope>NUCLEOTIDE SEQUENCE [LARGE SCALE GENOMIC DNA]</scope>
    <source>
        <strain>AX4</strain>
    </source>
</reference>
<sequence>MIIKKKKDWRTQLFNRSQKKTIERMRKERNNQSVEMDSHTFNNNNNNNNNNNINNNNNINNNNNNNNNNNNNNNSINNYGHQHLNSSSSSQSFQDQLVQDLQSILMAQQHNIISPQLQQQQQQQQQQQPSFNSNNNNNNNTNTYNFQPEAIENNNIGINSNGYNPIQQQFQQQHQLQQQIQQQQIQFQNQNQNQQTHQNRQLQQQQQHQIQQLQLQQQLQQQLQQQQQHQQQLQQQMQHQQMQQQQIPHHQQNQQLQQQQQQQVPHQQQNQLIQQQQQQQQQQQQQQQHQQHQQHQQHQQQHQQHQQQHQQHQQQHQHQHQQQHQQQQQPQNQQQQQPQNQQMQQQQQQNQQMQQQQQQNQQMQQQMQQQQQLQQQQQILQQQQQIQQQQQQQQQILQPQQQPQQQQQQQQLLQQQQQQQLMQQQQQQQQQQQQQQQQQQQQQQQQQQQQQQQPQQQQQIQQQQPQQQPQQQQQPQQQQSQQQPQPQQQQQQQQQQQQQQQQIQQQYVDDNGDNTLLIFISNMCRNVEIPAFSVQPDQYYQYFVEKIVVIWSDLISSSGSTKMTHEETQQQKSSLFEQCRRIIVTYPHFFNQIITERFIFDLEDLNSKISDIFKQFNNNNNNNNNNAIENSPIMAEQYKRFQTDYIIKFDQLQCFKFPDYSLSSIISTLNPSPLRQQQQQQQQQQQQQQQQQQQQQQQQQQQIQIQNQTIPIPPSPQPTQQYQPITQLDQQPQPQPQPQLQQQLQQTILDNNNNNNTNNTNNTNTINNNLDISNDIINSSNNIGLCSSPISLENEKGNNNNNNNKINNNNNTSSSSSITIPINNTTSSPINKNINDDINNNNNNNNSNNNNNNNNNNNNNNNNNNTNTNNEIKKTNNDISTNLSMPTVVDLNSSNNITSSTFLLNPNINNNNNNNSSGGGGSSSSSNSNSSSPNIPNKPKKPVKSNSKKVIDLLEDNDSDSSDSSDSSDSSDSSDSSDSSDSDSSDSSDSSDSSDDEKKKKPKKPIVNKKNLVKTNTSTNSKDSKPASTATSTTTTTTNSKPSITQPTSKIKPSSTIPSQPTSITTKKKPENSTTSLPASTSSSSPSNTVIKSSPPISKTLPTPTSTTSLSSSSSATVNKPIPPTTKKPISTINNNTLNNNTNSSINKIASNSTSTLGNKNLGTPSNYNNNNNNIGAEKKKEKALTLTESQLTNEKELPSLTDYIAQLNKIKKSNTTSGVTNSNNNNNNNNNNNNNNNNNNNNNNNNNKGTTTSTTTVINDPNKKKISWKDEKGGCSVVDRVPMFIQEFSECVTWPRIREFLIVIDSKMSNACKKRFLELGGLANIHTVLKYSQETVTIPRDTIIALKGLKGLPVTVEHLHAEKLIGKTIRSFKKHSNPNVKEYAEELESEWMYLIKGGATSNTSSTTSSASSSSSSSISNGNNSDKKRNRDQPITDTSKKLKSSSSSSSSSSSSSSSTNARSSSPVPNTQLPPKKSIIKEYDDLFMNKLSTPSSSSSSSSSSSSSSTTTTTTSTGSTIPLSPPPSSSSSSNNNNSLSPIMTFKTKQSIAAAAAKKQQTQELSDSTAKSLSSNGATTKLFAAMVDKKSQTKPGGGSGGSSNVSGKSDSSQTLLESIGISWDTPTKEEEDLTPVPDPNRRKSSKGKVSVKWLSDEKLVNVKEFCKEEIADAKANEEYELEQSKRFELETERLLGFKPMKATLEWKKPIPIEDTQLPDIKLYGSESLEKDIQFERENFTLMEFYIGSNIPDTPKEPDDEQKDYDDKDVLIIPSGDINDVFDDSKINELMNVIPPILSDQINDDNIINNNNNTHSNSPDENNTKMINDENNDPNNTGSSNKVVEMIANIDPNNNNNNNNINNNNNIINNINNNNNNNMNNNNMGNMNNMGNMNNQFNNMNNNNNNNQFNNGYNNNNNNNNNNNNNNNNNNNNMMGYNNGYNMNNGNQFNNNYNGVYQNNGFNNFNNQYNNGQYNGYNNSNGQFNNNNNNVYNNNNNNQFNNNFNQYNNNNNNNFNQNFNNGFNNNNNNNNQYNNGYNNFNNNNNYGNMNNYNNNNNNYYNNNNNNNNNNNNNQSYS</sequence>
<organism>
    <name type="scientific">Dictyostelium discoideum</name>
    <name type="common">Social amoeba</name>
    <dbReference type="NCBI Taxonomy" id="44689"/>
    <lineage>
        <taxon>Eukaryota</taxon>
        <taxon>Amoebozoa</taxon>
        <taxon>Evosea</taxon>
        <taxon>Eumycetozoa</taxon>
        <taxon>Dictyostelia</taxon>
        <taxon>Dictyosteliales</taxon>
        <taxon>Dictyosteliaceae</taxon>
        <taxon>Dictyostelium</taxon>
    </lineage>
</organism>
<name>MED26_DICDI</name>
<evidence type="ECO:0000250" key="1"/>
<evidence type="ECO:0000255" key="2"/>
<evidence type="ECO:0000256" key="3">
    <source>
        <dbReference type="SAM" id="MobiDB-lite"/>
    </source>
</evidence>
<evidence type="ECO:0000305" key="4"/>
<comment type="function">
    <text evidence="1">Component of the Mediator complex, a coactivator involved in the regulated transcription of nearly all RNA polymerase II-dependent genes. Mediator functions as a bridge to convey information from gene-specific regulatory proteins to the basal RNA polymerase II transcription machinery. Mediator is recruited to promoters by direct interactions with regulatory proteins and serves as a scaffold for the assembly of a functional preinitiation complex with RNA polymerase II and the general transcription factors (By similarity).</text>
</comment>
<comment type="subunit">
    <text evidence="1">Component of the Mediator complex.</text>
</comment>
<comment type="subcellular location">
    <subcellularLocation>
        <location evidence="4">Nucleus</location>
    </subcellularLocation>
</comment>
<comment type="similarity">
    <text evidence="4">Belongs to the Mediator complex subunit 26 family.</text>
</comment>
<dbReference type="EMBL" id="AAFI02000013">
    <property type="protein sequence ID" value="EAL69617.2"/>
    <property type="molecule type" value="Genomic_DNA"/>
</dbReference>
<dbReference type="RefSeq" id="XP_643556.2">
    <property type="nucleotide sequence ID" value="XM_638464.2"/>
</dbReference>
<dbReference type="FunCoup" id="Q552X2">
    <property type="interactions" value="702"/>
</dbReference>
<dbReference type="STRING" id="44689.Q552X2"/>
<dbReference type="PaxDb" id="44689-DDB0266833"/>
<dbReference type="EnsemblProtists" id="EAL69617">
    <property type="protein sequence ID" value="EAL69617"/>
    <property type="gene ID" value="DDB_G0275733"/>
</dbReference>
<dbReference type="GeneID" id="8620139"/>
<dbReference type="KEGG" id="ddi:DDB_G0275733"/>
<dbReference type="dictyBase" id="DDB_G0275733">
    <property type="gene designation" value="med26"/>
</dbReference>
<dbReference type="VEuPathDB" id="AmoebaDB:DDB_G0275733"/>
<dbReference type="eggNOG" id="ENOG502RSRG">
    <property type="taxonomic scope" value="Eukaryota"/>
</dbReference>
<dbReference type="HOGENOM" id="CLU_232796_0_0_1"/>
<dbReference type="InParanoid" id="Q552X2"/>
<dbReference type="OMA" id="KMSNACK"/>
<dbReference type="PRO" id="PR:Q552X2"/>
<dbReference type="Proteomes" id="UP000002195">
    <property type="component" value="Chromosome 2"/>
</dbReference>
<dbReference type="GO" id="GO:0000785">
    <property type="term" value="C:chromatin"/>
    <property type="evidence" value="ECO:0000318"/>
    <property type="project" value="GO_Central"/>
</dbReference>
<dbReference type="GO" id="GO:0016592">
    <property type="term" value="C:mediator complex"/>
    <property type="evidence" value="ECO:0000250"/>
    <property type="project" value="dictyBase"/>
</dbReference>
<dbReference type="GO" id="GO:0072357">
    <property type="term" value="C:PTW/PP1 phosphatase complex"/>
    <property type="evidence" value="ECO:0000318"/>
    <property type="project" value="GO_Central"/>
</dbReference>
<dbReference type="GO" id="GO:0008157">
    <property type="term" value="F:protein phosphatase 1 binding"/>
    <property type="evidence" value="ECO:0000318"/>
    <property type="project" value="GO_Central"/>
</dbReference>
<dbReference type="GO" id="GO:0003712">
    <property type="term" value="F:transcription coregulator activity"/>
    <property type="evidence" value="ECO:0000250"/>
    <property type="project" value="dictyBase"/>
</dbReference>
<dbReference type="GO" id="GO:0006357">
    <property type="term" value="P:regulation of transcription by RNA polymerase II"/>
    <property type="evidence" value="ECO:0000250"/>
    <property type="project" value="dictyBase"/>
</dbReference>
<dbReference type="InterPro" id="IPR035441">
    <property type="entry name" value="TFIIS/LEDGF_dom_sf"/>
</dbReference>
<dbReference type="InterPro" id="IPR017923">
    <property type="entry name" value="TFIIS_N"/>
</dbReference>
<dbReference type="PANTHER" id="PTHR46557">
    <property type="entry name" value="SERINE/THREONINE-PROTEIN PHOSPHATASE 1 REGULATORY SUBUNIT 10-RELATED"/>
    <property type="match status" value="1"/>
</dbReference>
<dbReference type="PANTHER" id="PTHR46557:SF1">
    <property type="entry name" value="SERINE_THREONINE-PROTEIN PHOSPHATASE 1 REGULATORY SUBUNIT 10"/>
    <property type="match status" value="1"/>
</dbReference>
<dbReference type="Pfam" id="PF08711">
    <property type="entry name" value="Med26"/>
    <property type="match status" value="1"/>
</dbReference>
<dbReference type="SUPFAM" id="SSF47676">
    <property type="entry name" value="Conserved domain common to transcription factors TFIIS, elongin A, CRSP70"/>
    <property type="match status" value="1"/>
</dbReference>
<feature type="chain" id="PRO_0000388661" description="Putative mediator of RNA polymerase II transcription subunit 26">
    <location>
        <begin position="1"/>
        <end position="2073"/>
    </location>
</feature>
<feature type="region of interest" description="Disordered" evidence="3">
    <location>
        <begin position="22"/>
        <end position="94"/>
    </location>
</feature>
<feature type="region of interest" description="Disordered" evidence="3">
    <location>
        <begin position="115"/>
        <end position="146"/>
    </location>
</feature>
<feature type="region of interest" description="Disordered" evidence="3">
    <location>
        <begin position="241"/>
        <end position="260"/>
    </location>
</feature>
<feature type="region of interest" description="Disordered" evidence="3">
    <location>
        <begin position="287"/>
        <end position="334"/>
    </location>
</feature>
<feature type="region of interest" description="Disordered" evidence="3">
    <location>
        <begin position="796"/>
        <end position="879"/>
    </location>
</feature>
<feature type="region of interest" description="Disordered" evidence="3">
    <location>
        <begin position="908"/>
        <end position="1175"/>
    </location>
</feature>
<feature type="region of interest" description="Disordered" evidence="3">
    <location>
        <begin position="1215"/>
        <end position="1260"/>
    </location>
</feature>
<feature type="region of interest" description="Disordered" evidence="3">
    <location>
        <begin position="1403"/>
        <end position="1475"/>
    </location>
</feature>
<feature type="region of interest" description="Disordered" evidence="3">
    <location>
        <begin position="1489"/>
        <end position="1539"/>
    </location>
</feature>
<feature type="region of interest" description="Disordered" evidence="3">
    <location>
        <begin position="1551"/>
        <end position="1571"/>
    </location>
</feature>
<feature type="region of interest" description="Disordered" evidence="3">
    <location>
        <begin position="1587"/>
        <end position="1645"/>
    </location>
</feature>
<feature type="region of interest" description="Disordered" evidence="3">
    <location>
        <begin position="1804"/>
        <end position="1836"/>
    </location>
</feature>
<feature type="region of interest" description="Disordered" evidence="3">
    <location>
        <begin position="1868"/>
        <end position="1935"/>
    </location>
</feature>
<feature type="region of interest" description="Disordered" evidence="3">
    <location>
        <begin position="2019"/>
        <end position="2073"/>
    </location>
</feature>
<feature type="coiled-coil region" evidence="2">
    <location>
        <begin position="166"/>
        <end position="453"/>
    </location>
</feature>
<feature type="coiled-coil region" evidence="2">
    <location>
        <begin position="674"/>
        <end position="710"/>
    </location>
</feature>
<feature type="coiled-coil region" evidence="2">
    <location>
        <begin position="1884"/>
        <end position="1930"/>
    </location>
</feature>
<feature type="compositionally biased region" description="Polar residues" evidence="3">
    <location>
        <begin position="31"/>
        <end position="41"/>
    </location>
</feature>
<feature type="compositionally biased region" description="Low complexity" evidence="3">
    <location>
        <begin position="42"/>
        <end position="78"/>
    </location>
</feature>
<feature type="compositionally biased region" description="Low complexity" evidence="3">
    <location>
        <begin position="287"/>
        <end position="314"/>
    </location>
</feature>
<feature type="compositionally biased region" description="Low complexity" evidence="3">
    <location>
        <begin position="322"/>
        <end position="334"/>
    </location>
</feature>
<feature type="compositionally biased region" description="Low complexity" evidence="3">
    <location>
        <begin position="798"/>
        <end position="870"/>
    </location>
</feature>
<feature type="compositionally biased region" description="Low complexity" evidence="3">
    <location>
        <begin position="923"/>
        <end position="937"/>
    </location>
</feature>
<feature type="compositionally biased region" description="Basic residues" evidence="3">
    <location>
        <begin position="938"/>
        <end position="947"/>
    </location>
</feature>
<feature type="compositionally biased region" description="Acidic residues" evidence="3">
    <location>
        <begin position="953"/>
        <end position="963"/>
    </location>
</feature>
<feature type="compositionally biased region" description="Low complexity" evidence="3">
    <location>
        <begin position="964"/>
        <end position="977"/>
    </location>
</feature>
<feature type="compositionally biased region" description="Low complexity" evidence="3">
    <location>
        <begin position="1027"/>
        <end position="1038"/>
    </location>
</feature>
<feature type="compositionally biased region" description="Low complexity" evidence="3">
    <location>
        <begin position="1047"/>
        <end position="1065"/>
    </location>
</feature>
<feature type="compositionally biased region" description="Low complexity" evidence="3">
    <location>
        <begin position="1073"/>
        <end position="1115"/>
    </location>
</feature>
<feature type="compositionally biased region" description="Low complexity" evidence="3">
    <location>
        <begin position="1127"/>
        <end position="1156"/>
    </location>
</feature>
<feature type="compositionally biased region" description="Polar residues" evidence="3">
    <location>
        <begin position="1157"/>
        <end position="1166"/>
    </location>
</feature>
<feature type="compositionally biased region" description="Low complexity" evidence="3">
    <location>
        <begin position="1215"/>
        <end position="1258"/>
    </location>
</feature>
<feature type="compositionally biased region" description="Low complexity" evidence="3">
    <location>
        <begin position="1403"/>
        <end position="1424"/>
    </location>
</feature>
<feature type="compositionally biased region" description="Basic and acidic residues" evidence="3">
    <location>
        <begin position="1425"/>
        <end position="1440"/>
    </location>
</feature>
<feature type="compositionally biased region" description="Low complexity" evidence="3">
    <location>
        <begin position="1444"/>
        <end position="1465"/>
    </location>
</feature>
<feature type="compositionally biased region" description="Low complexity" evidence="3">
    <location>
        <begin position="1490"/>
        <end position="1520"/>
    </location>
</feature>
<feature type="compositionally biased region" description="Low complexity" evidence="3">
    <location>
        <begin position="1527"/>
        <end position="1539"/>
    </location>
</feature>
<feature type="compositionally biased region" description="Low complexity" evidence="3">
    <location>
        <begin position="1551"/>
        <end position="1560"/>
    </location>
</feature>
<feature type="compositionally biased region" description="Polar residues" evidence="3">
    <location>
        <begin position="1561"/>
        <end position="1571"/>
    </location>
</feature>
<feature type="compositionally biased region" description="Low complexity" evidence="3">
    <location>
        <begin position="1599"/>
        <end position="1609"/>
    </location>
</feature>
<feature type="compositionally biased region" description="Low complexity" evidence="3">
    <location>
        <begin position="1804"/>
        <end position="1817"/>
    </location>
</feature>
<keyword id="KW-0010">Activator</keyword>
<keyword id="KW-0175">Coiled coil</keyword>
<keyword id="KW-0539">Nucleus</keyword>
<keyword id="KW-1185">Reference proteome</keyword>
<keyword id="KW-0804">Transcription</keyword>
<keyword id="KW-0805">Transcription regulation</keyword>
<accession>Q552X2</accession>
<accession>Q869L1</accession>